<protein>
    <recommendedName>
        <fullName evidence="3">Aspyridones cluster regulator</fullName>
    </recommendedName>
</protein>
<feature type="chain" id="PRO_0000438561" description="Aspyridones cluster regulator">
    <location>
        <begin position="1"/>
        <end position="425"/>
    </location>
</feature>
<feature type="DNA-binding region" description="Zn(2)-C6 fungal-type" evidence="1">
    <location>
        <begin position="100"/>
        <end position="127"/>
    </location>
</feature>
<feature type="region of interest" description="Disordered" evidence="2">
    <location>
        <begin position="132"/>
        <end position="159"/>
    </location>
</feature>
<feature type="compositionally biased region" description="Polar residues" evidence="2">
    <location>
        <begin position="133"/>
        <end position="157"/>
    </location>
</feature>
<organism>
    <name type="scientific">Neocamarosporium betae</name>
    <name type="common">Beet black rot fungus</name>
    <name type="synonym">Pleospora betae</name>
    <dbReference type="NCBI Taxonomy" id="1979465"/>
    <lineage>
        <taxon>Eukaryota</taxon>
        <taxon>Fungi</taxon>
        <taxon>Dikarya</taxon>
        <taxon>Ascomycota</taxon>
        <taxon>Pezizomycotina</taxon>
        <taxon>Dothideomycetes</taxon>
        <taxon>Pleosporomycetidae</taxon>
        <taxon>Pleosporales</taxon>
        <taxon>Pleosporineae</taxon>
        <taxon>Pleosporaceae</taxon>
        <taxon>Neocamarosporium</taxon>
    </lineage>
</organism>
<name>TF_NEOBT</name>
<keyword id="KW-0238">DNA-binding</keyword>
<keyword id="KW-0479">Metal-binding</keyword>
<keyword id="KW-0539">Nucleus</keyword>
<keyword id="KW-0804">Transcription</keyword>
<keyword id="KW-0805">Transcription regulation</keyword>
<keyword id="KW-0862">Zinc</keyword>
<evidence type="ECO:0000255" key="1">
    <source>
        <dbReference type="PROSITE-ProRule" id="PRU00227"/>
    </source>
</evidence>
<evidence type="ECO:0000256" key="2">
    <source>
        <dbReference type="SAM" id="MobiDB-lite"/>
    </source>
</evidence>
<evidence type="ECO:0000303" key="3">
    <source>
    </source>
</evidence>
<evidence type="ECO:0000305" key="4">
    <source>
    </source>
</evidence>
<gene>
    <name type="primary">TF</name>
</gene>
<reference key="1">
    <citation type="journal article" date="2004" name="Biosci. Biotechnol. Biochem.">
        <title>Cloning of a gene cluster responsible for the biosynthesis of diterpene aphidicolin, a specific inhibitor of DNA polymerase alpha.</title>
        <authorList>
            <person name="Toyomasu T."/>
            <person name="Nakaminami K."/>
            <person name="Toshima H."/>
            <person name="Mie T."/>
            <person name="Watanabe K."/>
            <person name="Ito H."/>
            <person name="Matsui H."/>
            <person name="Mitsuhashi W."/>
            <person name="Sassa T."/>
            <person name="Oikawa H."/>
        </authorList>
    </citation>
    <scope>NUCLEOTIDE SEQUENCE [GENOMIC DNA]</scope>
    <scope>IDENTIFICATION OF GENE CLUSTER</scope>
    <source>
        <strain>PS-16</strain>
    </source>
</reference>
<comment type="function">
    <text evidence="4">Transcription factor involved in regulation of gene cluster that mediates the biosynthesis of aphidicolin (PubMed:14745177).</text>
</comment>
<comment type="subcellular location">
    <subcellularLocation>
        <location evidence="1">Nucleus</location>
    </subcellularLocation>
</comment>
<dbReference type="EMBL" id="AB114137">
    <property type="protein sequence ID" value="BAD29975.1"/>
    <property type="molecule type" value="Genomic_DNA"/>
</dbReference>
<dbReference type="SMR" id="Q6F5E1"/>
<dbReference type="GO" id="GO:0005634">
    <property type="term" value="C:nucleus"/>
    <property type="evidence" value="ECO:0007669"/>
    <property type="project" value="UniProtKB-SubCell"/>
</dbReference>
<dbReference type="GO" id="GO:0003677">
    <property type="term" value="F:DNA binding"/>
    <property type="evidence" value="ECO:0007669"/>
    <property type="project" value="UniProtKB-KW"/>
</dbReference>
<dbReference type="GO" id="GO:0000981">
    <property type="term" value="F:DNA-binding transcription factor activity, RNA polymerase II-specific"/>
    <property type="evidence" value="ECO:0007669"/>
    <property type="project" value="InterPro"/>
</dbReference>
<dbReference type="GO" id="GO:0008270">
    <property type="term" value="F:zinc ion binding"/>
    <property type="evidence" value="ECO:0007669"/>
    <property type="project" value="InterPro"/>
</dbReference>
<dbReference type="GO" id="GO:0045122">
    <property type="term" value="P:aflatoxin biosynthetic process"/>
    <property type="evidence" value="ECO:0007669"/>
    <property type="project" value="InterPro"/>
</dbReference>
<dbReference type="CDD" id="cd00067">
    <property type="entry name" value="GAL4"/>
    <property type="match status" value="1"/>
</dbReference>
<dbReference type="Gene3D" id="4.10.240.10">
    <property type="entry name" value="Zn(2)-C6 fungal-type DNA-binding domain"/>
    <property type="match status" value="1"/>
</dbReference>
<dbReference type="InterPro" id="IPR013700">
    <property type="entry name" value="AflR"/>
</dbReference>
<dbReference type="InterPro" id="IPR036864">
    <property type="entry name" value="Zn2-C6_fun-type_DNA-bd_sf"/>
</dbReference>
<dbReference type="InterPro" id="IPR001138">
    <property type="entry name" value="Zn2Cys6_DnaBD"/>
</dbReference>
<dbReference type="Pfam" id="PF08493">
    <property type="entry name" value="AflR"/>
    <property type="match status" value="1"/>
</dbReference>
<dbReference type="SUPFAM" id="SSF57701">
    <property type="entry name" value="Zn2/Cys6 DNA-binding domain"/>
    <property type="match status" value="1"/>
</dbReference>
<dbReference type="PROSITE" id="PS00463">
    <property type="entry name" value="ZN2_CY6_FUNGAL_1"/>
    <property type="match status" value="1"/>
</dbReference>
<dbReference type="PROSITE" id="PS50048">
    <property type="entry name" value="ZN2_CY6_FUNGAL_2"/>
    <property type="match status" value="1"/>
</dbReference>
<sequence>MTPSDICPAIELPSSSRCMRIDYVGHPDAFSSCSNLCPTNLLRCIYSVRKYVLVRALSNFEDNTMFCTLRRSKDANKSYAIHMDDPPFARTKGRLSAIACVDCRASKTRCTGEPEGCKRCTFRKRPCQYPNLRRSNTTQHGEQIEASSSTFTMSDEQGSLGMEVSGQGSLDAQDINFANELTPVETAATMSDTMMSSECVTLNDSTITSSTIPFSIDSDIDLWNDVTGMAGSDTTSLWDYNAGSNDNIAAISTKEYVCACFAQALKTYESAEVHLVWSGRAHTADIMGLLQQQKNTISDCERLLDCVQCIEKSAFVVLLISICGKVLRSVEDASRELRPRDSVTEPTTKSKDPSQACLNIDANSISRHQLDDDDRLVVLGSLFLNRVTKLRSLIAAIEMLVMKRNWHIQRDMVRQLKSRVRLIDT</sequence>
<proteinExistence type="inferred from homology"/>
<accession>Q6F5E1</accession>